<evidence type="ECO:0000250" key="1"/>
<evidence type="ECO:0000256" key="2">
    <source>
        <dbReference type="SAM" id="MobiDB-lite"/>
    </source>
</evidence>
<evidence type="ECO:0000269" key="3">
    <source>
    </source>
</evidence>
<evidence type="ECO:0000269" key="4">
    <source>
    </source>
</evidence>
<evidence type="ECO:0000303" key="5">
    <source>
    </source>
</evidence>
<evidence type="ECO:0000305" key="6"/>
<name>WBP1_MOUSE</name>
<proteinExistence type="evidence at protein level"/>
<organism>
    <name type="scientific">Mus musculus</name>
    <name type="common">Mouse</name>
    <dbReference type="NCBI Taxonomy" id="10090"/>
    <lineage>
        <taxon>Eukaryota</taxon>
        <taxon>Metazoa</taxon>
        <taxon>Chordata</taxon>
        <taxon>Craniata</taxon>
        <taxon>Vertebrata</taxon>
        <taxon>Euteleostomi</taxon>
        <taxon>Mammalia</taxon>
        <taxon>Eutheria</taxon>
        <taxon>Euarchontoglires</taxon>
        <taxon>Glires</taxon>
        <taxon>Rodentia</taxon>
        <taxon>Myomorpha</taxon>
        <taxon>Muroidea</taxon>
        <taxon>Muridae</taxon>
        <taxon>Murinae</taxon>
        <taxon>Mus</taxon>
        <taxon>Mus</taxon>
    </lineage>
</organism>
<sequence>MARASSRNSSEEAWGSLQAPQQQQSPAASSLEGAIWRRAGTQTRALDTILYHPQQSHLLRELCPGVNTQPYLCETGHCCGETGCCTYYYELWWFWLLWTVLILFSCCCAFRHRRAKLRLQQQQRQREINLLAYHGACHGAGPVPTGSLLDLRLLSAFKPPAYEDVVHHPGTPPPPYTVGPGYPWTTSSECTRCSSESSCSAHLEGTNVEGVSSQQSALPHQEGEPRAGLSPVHIPPSCRYRRLTGDSGIELCPCPDSSEGEPLKEARASASQPDLEDHSPCALPPDSVSQVPPMGLASSCGDIP</sequence>
<accession>P97764</accession>
<accession>Q8WUP5</accession>
<accession>Q99J20</accession>
<dbReference type="EMBL" id="U40825">
    <property type="protein sequence ID" value="AAB40892.1"/>
    <property type="molecule type" value="mRNA"/>
</dbReference>
<dbReference type="EMBL" id="BC005666">
    <property type="protein sequence ID" value="AAH05666.1"/>
    <property type="molecule type" value="mRNA"/>
</dbReference>
<dbReference type="EMBL" id="BC019889">
    <property type="protein sequence ID" value="AAH19889.1"/>
    <property type="molecule type" value="mRNA"/>
</dbReference>
<dbReference type="CCDS" id="CCDS39528.1">
    <molecule id="P97764-2"/>
</dbReference>
<dbReference type="CCDS" id="CCDS39529.1">
    <molecule id="P97764-1"/>
</dbReference>
<dbReference type="RefSeq" id="NP_001077392.1">
    <molecule id="P97764-2"/>
    <property type="nucleotide sequence ID" value="NM_001083923.1"/>
</dbReference>
<dbReference type="RefSeq" id="NP_058037.2">
    <molecule id="P97764-1"/>
    <property type="nucleotide sequence ID" value="NM_016757.2"/>
</dbReference>
<dbReference type="BioGRID" id="204545">
    <property type="interactions" value="2"/>
</dbReference>
<dbReference type="ELM" id="P97764"/>
<dbReference type="FunCoup" id="P97764">
    <property type="interactions" value="35"/>
</dbReference>
<dbReference type="IntAct" id="P97764">
    <property type="interactions" value="2"/>
</dbReference>
<dbReference type="MINT" id="P97764"/>
<dbReference type="STRING" id="10090.ENSMUSP00000032111"/>
<dbReference type="PhosphoSitePlus" id="P97764"/>
<dbReference type="PaxDb" id="10090-ENSMUSP00000032111"/>
<dbReference type="Antibodypedia" id="34809">
    <property type="antibodies" value="72 antibodies from 26 providers"/>
</dbReference>
<dbReference type="DNASU" id="22377"/>
<dbReference type="Ensembl" id="ENSMUST00000032111.11">
    <molecule id="P97764-1"/>
    <property type="protein sequence ID" value="ENSMUSP00000032111.5"/>
    <property type="gene ID" value="ENSMUSG00000030035.15"/>
</dbReference>
<dbReference type="Ensembl" id="ENSMUST00000113936.10">
    <molecule id="P97764-2"/>
    <property type="protein sequence ID" value="ENSMUSP00000109569.4"/>
    <property type="gene ID" value="ENSMUSG00000030035.15"/>
</dbReference>
<dbReference type="GeneID" id="22377"/>
<dbReference type="KEGG" id="mmu:22377"/>
<dbReference type="UCSC" id="uc009cmo.1">
    <molecule id="P97764-1"/>
    <property type="organism name" value="mouse"/>
</dbReference>
<dbReference type="UCSC" id="uc009cmq.1">
    <molecule id="P97764-2"/>
    <property type="organism name" value="mouse"/>
</dbReference>
<dbReference type="AGR" id="MGI:104710"/>
<dbReference type="CTD" id="23559"/>
<dbReference type="MGI" id="MGI:104710">
    <property type="gene designation" value="Wbp1"/>
</dbReference>
<dbReference type="VEuPathDB" id="HostDB:ENSMUSG00000030035"/>
<dbReference type="eggNOG" id="ENOG502RYC0">
    <property type="taxonomic scope" value="Eukaryota"/>
</dbReference>
<dbReference type="GeneTree" id="ENSGT00950000183109"/>
<dbReference type="InParanoid" id="P97764"/>
<dbReference type="OMA" id="NGSHETW"/>
<dbReference type="OrthoDB" id="9907279at2759"/>
<dbReference type="PhylomeDB" id="P97764"/>
<dbReference type="TreeFam" id="TF330726"/>
<dbReference type="BioGRID-ORCS" id="22377">
    <property type="hits" value="2 hits in 76 CRISPR screens"/>
</dbReference>
<dbReference type="ChiTaRS" id="Wbp1">
    <property type="organism name" value="mouse"/>
</dbReference>
<dbReference type="PRO" id="PR:P97764"/>
<dbReference type="Proteomes" id="UP000000589">
    <property type="component" value="Chromosome 6"/>
</dbReference>
<dbReference type="RNAct" id="P97764">
    <property type="molecule type" value="protein"/>
</dbReference>
<dbReference type="Bgee" id="ENSMUSG00000030035">
    <property type="expression patterns" value="Expressed in cortical plate and 270 other cell types or tissues"/>
</dbReference>
<dbReference type="ExpressionAtlas" id="P97764">
    <property type="expression patterns" value="baseline and differential"/>
</dbReference>
<dbReference type="GO" id="GO:0050699">
    <property type="term" value="F:WW domain binding"/>
    <property type="evidence" value="ECO:0000353"/>
    <property type="project" value="UniProtKB"/>
</dbReference>
<dbReference type="InterPro" id="IPR021684">
    <property type="entry name" value="WBP1-like"/>
</dbReference>
<dbReference type="InterPro" id="IPR051994">
    <property type="entry name" value="WW_domain-binding"/>
</dbReference>
<dbReference type="PANTHER" id="PTHR16209">
    <property type="entry name" value="VESICULAR, OVEREXPRESSED IN CANCER, PROSURVIVAL PROTEIN 1"/>
    <property type="match status" value="1"/>
</dbReference>
<dbReference type="PANTHER" id="PTHR16209:SF5">
    <property type="entry name" value="WW DOMAIN-BINDING PROTEIN 1"/>
    <property type="match status" value="1"/>
</dbReference>
<dbReference type="Pfam" id="PF11669">
    <property type="entry name" value="WBP-1"/>
    <property type="match status" value="1"/>
</dbReference>
<comment type="subunit">
    <text evidence="1 3 4">Binds to the WW domain of YAP1, WWP1 and WWP2. Interacts with WWOX (By similarity). Interacts with NEDD4.</text>
</comment>
<comment type="interaction">
    <interactant intactId="EBI-6304160">
        <id>P97764</id>
    </interactant>
    <interactant intactId="EBI-773516">
        <id>P46935</id>
        <label>Nedd4</label>
    </interactant>
    <organismsDiffer>false</organismsDiffer>
    <experiments>3</experiments>
</comment>
<comment type="interaction">
    <interactant intactId="EBI-6304160">
        <id>P97764</id>
    </interactant>
    <interactant intactId="EBI-1044059">
        <id>P46937</id>
        <label>YAP1</label>
    </interactant>
    <organismsDiffer>true</organismsDiffer>
    <experiments>13</experiments>
</comment>
<comment type="alternative products">
    <event type="alternative splicing"/>
    <isoform>
        <id>P97764-1</id>
        <name>1</name>
        <sequence type="displayed"/>
    </isoform>
    <isoform>
        <id>P97764-2</id>
        <name>2</name>
        <sequence type="described" ref="VSP_004022"/>
    </isoform>
</comment>
<comment type="domain">
    <text evidence="1 3">The PPxY motif 2 mediates interaction with WWOX (By similarity). Both PPxY motifs mediate interaction with NEDD4.</text>
</comment>
<protein>
    <recommendedName>
        <fullName>WW domain-binding protein 1</fullName>
        <shortName>WBP-1</shortName>
    </recommendedName>
</protein>
<feature type="chain" id="PRO_0000065949" description="WW domain-binding protein 1">
    <location>
        <begin position="1"/>
        <end position="304"/>
    </location>
</feature>
<feature type="region of interest" description="Disordered" evidence="2">
    <location>
        <begin position="1"/>
        <end position="26"/>
    </location>
</feature>
<feature type="region of interest" description="Disordered" evidence="2">
    <location>
        <begin position="206"/>
        <end position="235"/>
    </location>
</feature>
<feature type="region of interest" description="Disordered" evidence="2">
    <location>
        <begin position="252"/>
        <end position="304"/>
    </location>
</feature>
<feature type="short sequence motif" description="PPxY motif 1">
    <location>
        <begin position="159"/>
        <end position="162"/>
    </location>
</feature>
<feature type="short sequence motif" description="PPxY motif 2">
    <location>
        <begin position="172"/>
        <end position="176"/>
    </location>
</feature>
<feature type="compositionally biased region" description="Polar residues" evidence="2">
    <location>
        <begin position="209"/>
        <end position="218"/>
    </location>
</feature>
<feature type="splice variant" id="VSP_004022" description="In isoform 2." evidence="5">
    <location>
        <begin position="24"/>
        <end position="58"/>
    </location>
</feature>
<feature type="mutagenesis site" description="Abolishes interaction with NEDD4." evidence="3">
    <original>Y</original>
    <variation>A</variation>
    <location>
        <position position="162"/>
    </location>
</feature>
<feature type="mutagenesis site" description="Abolishes interaction with NEDD4." evidence="3">
    <original>Y</original>
    <variation>A</variation>
    <location>
        <position position="176"/>
    </location>
</feature>
<feature type="sequence conflict" description="In Ref. 1; AAB40892." evidence="6" ref="1">
    <original>DIP</original>
    <variation>TSHK</variation>
    <location>
        <begin position="302"/>
        <end position="304"/>
    </location>
</feature>
<gene>
    <name type="primary">Wbp1</name>
</gene>
<keyword id="KW-0025">Alternative splicing</keyword>
<keyword id="KW-1185">Reference proteome</keyword>
<keyword id="KW-0677">Repeat</keyword>
<reference key="1">
    <citation type="journal article" date="1995" name="Proc. Natl. Acad. Sci. U.S.A.">
        <title>The WW domain of Yes-associated protein binds a proline-rich ligand that differs from the consensus established for Src homology 3-binding modules.</title>
        <authorList>
            <person name="Chen H.I."/>
            <person name="Sudol M."/>
        </authorList>
    </citation>
    <scope>NUCLEOTIDE SEQUENCE [MRNA] (ISOFORM 1)</scope>
    <scope>INTERACTION WITH YAP1</scope>
</reference>
<reference key="2">
    <citation type="journal article" date="2004" name="Genome Res.">
        <title>The status, quality, and expansion of the NIH full-length cDNA project: the Mammalian Gene Collection (MGC).</title>
        <authorList>
            <consortium name="The MGC Project Team"/>
        </authorList>
    </citation>
    <scope>NUCLEOTIDE SEQUENCE [LARGE SCALE MRNA] (ISOFORMS 1 AND 2)</scope>
    <source>
        <tissue>Liver</tissue>
    </source>
</reference>
<reference key="3">
    <citation type="journal article" date="2000" name="Biochem. J.">
        <title>Identification of multiple proteins expressed in murine embryos as binding partners for the WW domains of the ubiquitin-protein ligase Nedd4.</title>
        <authorList>
            <person name="Jolliffe C.N."/>
            <person name="Harvey K.F."/>
            <person name="Haines B.P."/>
            <person name="Parasivam G."/>
            <person name="Kumar S."/>
        </authorList>
    </citation>
    <scope>INTERACTION WITH NEDD4</scope>
    <scope>DOMAINS</scope>
    <scope>MUTAGENESIS OF TYR-162 AND TYR-176</scope>
    <source>
        <tissue>Embryo</tissue>
    </source>
</reference>